<accession>B7V9C1</accession>
<feature type="chain" id="PRO_1000191454" description="Lipoyl synthase">
    <location>
        <begin position="1"/>
        <end position="327"/>
    </location>
</feature>
<feature type="domain" description="Radical SAM core" evidence="2">
    <location>
        <begin position="86"/>
        <end position="303"/>
    </location>
</feature>
<feature type="binding site" evidence="1">
    <location>
        <position position="74"/>
    </location>
    <ligand>
        <name>[4Fe-4S] cluster</name>
        <dbReference type="ChEBI" id="CHEBI:49883"/>
        <label>1</label>
    </ligand>
</feature>
<feature type="binding site" evidence="1">
    <location>
        <position position="79"/>
    </location>
    <ligand>
        <name>[4Fe-4S] cluster</name>
        <dbReference type="ChEBI" id="CHEBI:49883"/>
        <label>1</label>
    </ligand>
</feature>
<feature type="binding site" evidence="1">
    <location>
        <position position="85"/>
    </location>
    <ligand>
        <name>[4Fe-4S] cluster</name>
        <dbReference type="ChEBI" id="CHEBI:49883"/>
        <label>1</label>
    </ligand>
</feature>
<feature type="binding site" evidence="1">
    <location>
        <position position="100"/>
    </location>
    <ligand>
        <name>[4Fe-4S] cluster</name>
        <dbReference type="ChEBI" id="CHEBI:49883"/>
        <label>2</label>
        <note>4Fe-4S-S-AdoMet</note>
    </ligand>
</feature>
<feature type="binding site" evidence="1">
    <location>
        <position position="104"/>
    </location>
    <ligand>
        <name>[4Fe-4S] cluster</name>
        <dbReference type="ChEBI" id="CHEBI:49883"/>
        <label>2</label>
        <note>4Fe-4S-S-AdoMet</note>
    </ligand>
</feature>
<feature type="binding site" evidence="1">
    <location>
        <position position="107"/>
    </location>
    <ligand>
        <name>[4Fe-4S] cluster</name>
        <dbReference type="ChEBI" id="CHEBI:49883"/>
        <label>2</label>
        <note>4Fe-4S-S-AdoMet</note>
    </ligand>
</feature>
<feature type="binding site" evidence="1">
    <location>
        <position position="314"/>
    </location>
    <ligand>
        <name>[4Fe-4S] cluster</name>
        <dbReference type="ChEBI" id="CHEBI:49883"/>
        <label>1</label>
    </ligand>
</feature>
<reference key="1">
    <citation type="journal article" date="2009" name="Genome Res.">
        <title>Newly introduced genomic prophage islands are critical determinants of in vivo competitiveness in the Liverpool epidemic strain of Pseudomonas aeruginosa.</title>
        <authorList>
            <person name="Winstanley C."/>
            <person name="Langille M.G.I."/>
            <person name="Fothergill J.L."/>
            <person name="Kukavica-Ibrulj I."/>
            <person name="Paradis-Bleau C."/>
            <person name="Sanschagrin F."/>
            <person name="Thomson N.R."/>
            <person name="Winsor G.L."/>
            <person name="Quail M.A."/>
            <person name="Lennard N."/>
            <person name="Bignell A."/>
            <person name="Clarke L."/>
            <person name="Seeger K."/>
            <person name="Saunders D."/>
            <person name="Harris D."/>
            <person name="Parkhill J."/>
            <person name="Hancock R.E.W."/>
            <person name="Brinkman F.S.L."/>
            <person name="Levesque R.C."/>
        </authorList>
    </citation>
    <scope>NUCLEOTIDE SEQUENCE [LARGE SCALE GENOMIC DNA]</scope>
    <source>
        <strain>LESB58</strain>
    </source>
</reference>
<sequence length="327" mass="36733">MSTVVEKSGEAKPGKVEVGVKLRGAEKVARIPVKIIPTEELPKKPDWIRVRIPVSPEVDRIKQLLRKHKLHSVCEEASCPNLGECFSGGTATFMIMGDICTRRCPFCDVGHGRPKPLDVDEPTNLAIAIADLRLKYVVITSVDRDDLRDGGAQHFADCLREIRKLSPGIQLETLVPDYRGRMDIALEITANEPPDVFNHNLETVPRLYRSSRPGSDFEWSLDLLQKFKQMVPHVPTKSGLMLGLGETDDEVIEVMQRMREHDIDMLTLGQYLQPSRNHLPVQRFVHPDTFAWFAEEGEKMGFKNVASGPLVRSSYHADQQAHGNKIG</sequence>
<dbReference type="EC" id="2.8.1.8" evidence="1"/>
<dbReference type="EMBL" id="FM209186">
    <property type="protein sequence ID" value="CAW25707.1"/>
    <property type="molecule type" value="Genomic_DNA"/>
</dbReference>
<dbReference type="RefSeq" id="WP_003119196.1">
    <property type="nucleotide sequence ID" value="NC_011770.1"/>
</dbReference>
<dbReference type="SMR" id="B7V9C1"/>
<dbReference type="KEGG" id="pag:PLES_09801"/>
<dbReference type="HOGENOM" id="CLU_033144_2_1_6"/>
<dbReference type="UniPathway" id="UPA00538">
    <property type="reaction ID" value="UER00593"/>
</dbReference>
<dbReference type="GO" id="GO:0005737">
    <property type="term" value="C:cytoplasm"/>
    <property type="evidence" value="ECO:0007669"/>
    <property type="project" value="UniProtKB-SubCell"/>
</dbReference>
<dbReference type="GO" id="GO:0051539">
    <property type="term" value="F:4 iron, 4 sulfur cluster binding"/>
    <property type="evidence" value="ECO:0007669"/>
    <property type="project" value="UniProtKB-UniRule"/>
</dbReference>
<dbReference type="GO" id="GO:0016992">
    <property type="term" value="F:lipoate synthase activity"/>
    <property type="evidence" value="ECO:0007669"/>
    <property type="project" value="UniProtKB-UniRule"/>
</dbReference>
<dbReference type="GO" id="GO:0046872">
    <property type="term" value="F:metal ion binding"/>
    <property type="evidence" value="ECO:0007669"/>
    <property type="project" value="UniProtKB-KW"/>
</dbReference>
<dbReference type="CDD" id="cd01335">
    <property type="entry name" value="Radical_SAM"/>
    <property type="match status" value="1"/>
</dbReference>
<dbReference type="FunFam" id="3.20.20.70:FF:000023">
    <property type="entry name" value="Lipoyl synthase"/>
    <property type="match status" value="1"/>
</dbReference>
<dbReference type="Gene3D" id="3.20.20.70">
    <property type="entry name" value="Aldolase class I"/>
    <property type="match status" value="1"/>
</dbReference>
<dbReference type="HAMAP" id="MF_00206">
    <property type="entry name" value="Lipoyl_synth"/>
    <property type="match status" value="1"/>
</dbReference>
<dbReference type="InterPro" id="IPR013785">
    <property type="entry name" value="Aldolase_TIM"/>
</dbReference>
<dbReference type="InterPro" id="IPR006638">
    <property type="entry name" value="Elp3/MiaA/NifB-like_rSAM"/>
</dbReference>
<dbReference type="InterPro" id="IPR031691">
    <property type="entry name" value="LIAS_N"/>
</dbReference>
<dbReference type="InterPro" id="IPR003698">
    <property type="entry name" value="Lipoyl_synth"/>
</dbReference>
<dbReference type="InterPro" id="IPR007197">
    <property type="entry name" value="rSAM"/>
</dbReference>
<dbReference type="NCBIfam" id="TIGR00510">
    <property type="entry name" value="lipA"/>
    <property type="match status" value="1"/>
</dbReference>
<dbReference type="NCBIfam" id="NF004019">
    <property type="entry name" value="PRK05481.1"/>
    <property type="match status" value="1"/>
</dbReference>
<dbReference type="NCBIfam" id="NF009544">
    <property type="entry name" value="PRK12928.1"/>
    <property type="match status" value="1"/>
</dbReference>
<dbReference type="PANTHER" id="PTHR10949">
    <property type="entry name" value="LIPOYL SYNTHASE"/>
    <property type="match status" value="1"/>
</dbReference>
<dbReference type="PANTHER" id="PTHR10949:SF0">
    <property type="entry name" value="LIPOYL SYNTHASE, MITOCHONDRIAL"/>
    <property type="match status" value="1"/>
</dbReference>
<dbReference type="Pfam" id="PF16881">
    <property type="entry name" value="LIAS_N"/>
    <property type="match status" value="1"/>
</dbReference>
<dbReference type="Pfam" id="PF04055">
    <property type="entry name" value="Radical_SAM"/>
    <property type="match status" value="1"/>
</dbReference>
<dbReference type="PIRSF" id="PIRSF005963">
    <property type="entry name" value="Lipoyl_synth"/>
    <property type="match status" value="1"/>
</dbReference>
<dbReference type="SFLD" id="SFLDF00271">
    <property type="entry name" value="lipoyl_synthase"/>
    <property type="match status" value="1"/>
</dbReference>
<dbReference type="SFLD" id="SFLDG01058">
    <property type="entry name" value="lipoyl_synthase_like"/>
    <property type="match status" value="1"/>
</dbReference>
<dbReference type="SMART" id="SM00729">
    <property type="entry name" value="Elp3"/>
    <property type="match status" value="1"/>
</dbReference>
<dbReference type="SUPFAM" id="SSF102114">
    <property type="entry name" value="Radical SAM enzymes"/>
    <property type="match status" value="1"/>
</dbReference>
<dbReference type="PROSITE" id="PS51918">
    <property type="entry name" value="RADICAL_SAM"/>
    <property type="match status" value="1"/>
</dbReference>
<keyword id="KW-0004">4Fe-4S</keyword>
<keyword id="KW-0963">Cytoplasm</keyword>
<keyword id="KW-0408">Iron</keyword>
<keyword id="KW-0411">Iron-sulfur</keyword>
<keyword id="KW-0479">Metal-binding</keyword>
<keyword id="KW-0949">S-adenosyl-L-methionine</keyword>
<keyword id="KW-0808">Transferase</keyword>
<comment type="function">
    <text evidence="1">Catalyzes the radical-mediated insertion of two sulfur atoms into the C-6 and C-8 positions of the octanoyl moiety bound to the lipoyl domains of lipoate-dependent enzymes, thereby converting the octanoylated domains into lipoylated derivatives.</text>
</comment>
<comment type="catalytic activity">
    <reaction evidence="1">
        <text>[[Fe-S] cluster scaffold protein carrying a second [4Fe-4S](2+) cluster] + N(6)-octanoyl-L-lysyl-[protein] + 2 oxidized [2Fe-2S]-[ferredoxin] + 2 S-adenosyl-L-methionine + 4 H(+) = [[Fe-S] cluster scaffold protein] + N(6)-[(R)-dihydrolipoyl]-L-lysyl-[protein] + 4 Fe(3+) + 2 hydrogen sulfide + 2 5'-deoxyadenosine + 2 L-methionine + 2 reduced [2Fe-2S]-[ferredoxin]</text>
        <dbReference type="Rhea" id="RHEA:16585"/>
        <dbReference type="Rhea" id="RHEA-COMP:9928"/>
        <dbReference type="Rhea" id="RHEA-COMP:10000"/>
        <dbReference type="Rhea" id="RHEA-COMP:10001"/>
        <dbReference type="Rhea" id="RHEA-COMP:10475"/>
        <dbReference type="Rhea" id="RHEA-COMP:14568"/>
        <dbReference type="Rhea" id="RHEA-COMP:14569"/>
        <dbReference type="ChEBI" id="CHEBI:15378"/>
        <dbReference type="ChEBI" id="CHEBI:17319"/>
        <dbReference type="ChEBI" id="CHEBI:29034"/>
        <dbReference type="ChEBI" id="CHEBI:29919"/>
        <dbReference type="ChEBI" id="CHEBI:33722"/>
        <dbReference type="ChEBI" id="CHEBI:33737"/>
        <dbReference type="ChEBI" id="CHEBI:33738"/>
        <dbReference type="ChEBI" id="CHEBI:57844"/>
        <dbReference type="ChEBI" id="CHEBI:59789"/>
        <dbReference type="ChEBI" id="CHEBI:78809"/>
        <dbReference type="ChEBI" id="CHEBI:83100"/>
        <dbReference type="EC" id="2.8.1.8"/>
    </reaction>
</comment>
<comment type="cofactor">
    <cofactor evidence="1">
        <name>[4Fe-4S] cluster</name>
        <dbReference type="ChEBI" id="CHEBI:49883"/>
    </cofactor>
    <text evidence="1">Binds 2 [4Fe-4S] clusters per subunit. One cluster is coordinated with 3 cysteines and an exchangeable S-adenosyl-L-methionine.</text>
</comment>
<comment type="pathway">
    <text evidence="1">Protein modification; protein lipoylation via endogenous pathway; protein N(6)-(lipoyl)lysine from octanoyl-[acyl-carrier-protein]: step 2/2.</text>
</comment>
<comment type="subcellular location">
    <subcellularLocation>
        <location evidence="1">Cytoplasm</location>
    </subcellularLocation>
</comment>
<comment type="similarity">
    <text evidence="1">Belongs to the radical SAM superfamily. Lipoyl synthase family.</text>
</comment>
<organism>
    <name type="scientific">Pseudomonas aeruginosa (strain LESB58)</name>
    <dbReference type="NCBI Taxonomy" id="557722"/>
    <lineage>
        <taxon>Bacteria</taxon>
        <taxon>Pseudomonadati</taxon>
        <taxon>Pseudomonadota</taxon>
        <taxon>Gammaproteobacteria</taxon>
        <taxon>Pseudomonadales</taxon>
        <taxon>Pseudomonadaceae</taxon>
        <taxon>Pseudomonas</taxon>
    </lineage>
</organism>
<gene>
    <name evidence="1" type="primary">lipA</name>
    <name type="ordered locus">PLES_09801</name>
</gene>
<proteinExistence type="inferred from homology"/>
<evidence type="ECO:0000255" key="1">
    <source>
        <dbReference type="HAMAP-Rule" id="MF_00206"/>
    </source>
</evidence>
<evidence type="ECO:0000255" key="2">
    <source>
        <dbReference type="PROSITE-ProRule" id="PRU01266"/>
    </source>
</evidence>
<name>LIPA_PSEA8</name>
<protein>
    <recommendedName>
        <fullName evidence="1">Lipoyl synthase</fullName>
        <ecNumber evidence="1">2.8.1.8</ecNumber>
    </recommendedName>
    <alternativeName>
        <fullName evidence="1">Lip-syn</fullName>
        <shortName evidence="1">LS</shortName>
    </alternativeName>
    <alternativeName>
        <fullName evidence="1">Lipoate synthase</fullName>
    </alternativeName>
    <alternativeName>
        <fullName evidence="1">Lipoic acid synthase</fullName>
    </alternativeName>
    <alternativeName>
        <fullName evidence="1">Sulfur insertion protein LipA</fullName>
    </alternativeName>
</protein>